<proteinExistence type="evidence at transcript level"/>
<feature type="chain" id="PRO_0000459585" description="DCN1-like protein 3">
    <location>
        <begin position="1"/>
        <end position="334"/>
    </location>
</feature>
<feature type="domain" description="DCUN1" evidence="2">
    <location>
        <begin position="112"/>
        <end position="301"/>
    </location>
</feature>
<feature type="region of interest" description="Disordered" evidence="3">
    <location>
        <begin position="308"/>
        <end position="334"/>
    </location>
</feature>
<feature type="compositionally biased region" description="Basic and acidic residues" evidence="3">
    <location>
        <begin position="325"/>
        <end position="334"/>
    </location>
</feature>
<organism evidence="9">
    <name type="scientific">Drosophila melanogaster</name>
    <name type="common">Fruit fly</name>
    <dbReference type="NCBI Taxonomy" id="7227"/>
    <lineage>
        <taxon>Eukaryota</taxon>
        <taxon>Metazoa</taxon>
        <taxon>Ecdysozoa</taxon>
        <taxon>Arthropoda</taxon>
        <taxon>Hexapoda</taxon>
        <taxon>Insecta</taxon>
        <taxon>Pterygota</taxon>
        <taxon>Neoptera</taxon>
        <taxon>Endopterygota</taxon>
        <taxon>Diptera</taxon>
        <taxon>Brachycera</taxon>
        <taxon>Muscomorpha</taxon>
        <taxon>Ephydroidea</taxon>
        <taxon>Drosophilidae</taxon>
        <taxon>Drosophila</taxon>
        <taxon>Sophophora</taxon>
    </lineage>
</organism>
<keyword id="KW-1003">Cell membrane</keyword>
<keyword id="KW-0472">Membrane</keyword>
<keyword id="KW-1185">Reference proteome</keyword>
<keyword id="KW-0833">Ubl conjugation pathway</keyword>
<reference evidence="9" key="1">
    <citation type="journal article" date="2000" name="Science">
        <title>The genome sequence of Drosophila melanogaster.</title>
        <authorList>
            <person name="Adams M.D."/>
            <person name="Celniker S.E."/>
            <person name="Holt R.A."/>
            <person name="Evans C.A."/>
            <person name="Gocayne J.D."/>
            <person name="Amanatides P.G."/>
            <person name="Scherer S.E."/>
            <person name="Li P.W."/>
            <person name="Hoskins R.A."/>
            <person name="Galle R.F."/>
            <person name="George R.A."/>
            <person name="Lewis S.E."/>
            <person name="Richards S."/>
            <person name="Ashburner M."/>
            <person name="Henderson S.N."/>
            <person name="Sutton G.G."/>
            <person name="Wortman J.R."/>
            <person name="Yandell M.D."/>
            <person name="Zhang Q."/>
            <person name="Chen L.X."/>
            <person name="Brandon R.C."/>
            <person name="Rogers Y.-H.C."/>
            <person name="Blazej R.G."/>
            <person name="Champe M."/>
            <person name="Pfeiffer B.D."/>
            <person name="Wan K.H."/>
            <person name="Doyle C."/>
            <person name="Baxter E.G."/>
            <person name="Helt G."/>
            <person name="Nelson C.R."/>
            <person name="Miklos G.L.G."/>
            <person name="Abril J.F."/>
            <person name="Agbayani A."/>
            <person name="An H.-J."/>
            <person name="Andrews-Pfannkoch C."/>
            <person name="Baldwin D."/>
            <person name="Ballew R.M."/>
            <person name="Basu A."/>
            <person name="Baxendale J."/>
            <person name="Bayraktaroglu L."/>
            <person name="Beasley E.M."/>
            <person name="Beeson K.Y."/>
            <person name="Benos P.V."/>
            <person name="Berman B.P."/>
            <person name="Bhandari D."/>
            <person name="Bolshakov S."/>
            <person name="Borkova D."/>
            <person name="Botchan M.R."/>
            <person name="Bouck J."/>
            <person name="Brokstein P."/>
            <person name="Brottier P."/>
            <person name="Burtis K.C."/>
            <person name="Busam D.A."/>
            <person name="Butler H."/>
            <person name="Cadieu E."/>
            <person name="Center A."/>
            <person name="Chandra I."/>
            <person name="Cherry J.M."/>
            <person name="Cawley S."/>
            <person name="Dahlke C."/>
            <person name="Davenport L.B."/>
            <person name="Davies P."/>
            <person name="de Pablos B."/>
            <person name="Delcher A."/>
            <person name="Deng Z."/>
            <person name="Mays A.D."/>
            <person name="Dew I."/>
            <person name="Dietz S.M."/>
            <person name="Dodson K."/>
            <person name="Doup L.E."/>
            <person name="Downes M."/>
            <person name="Dugan-Rocha S."/>
            <person name="Dunkov B.C."/>
            <person name="Dunn P."/>
            <person name="Durbin K.J."/>
            <person name="Evangelista C.C."/>
            <person name="Ferraz C."/>
            <person name="Ferriera S."/>
            <person name="Fleischmann W."/>
            <person name="Fosler C."/>
            <person name="Gabrielian A.E."/>
            <person name="Garg N.S."/>
            <person name="Gelbart W.M."/>
            <person name="Glasser K."/>
            <person name="Glodek A."/>
            <person name="Gong F."/>
            <person name="Gorrell J.H."/>
            <person name="Gu Z."/>
            <person name="Guan P."/>
            <person name="Harris M."/>
            <person name="Harris N.L."/>
            <person name="Harvey D.A."/>
            <person name="Heiman T.J."/>
            <person name="Hernandez J.R."/>
            <person name="Houck J."/>
            <person name="Hostin D."/>
            <person name="Houston K.A."/>
            <person name="Howland T.J."/>
            <person name="Wei M.-H."/>
            <person name="Ibegwam C."/>
            <person name="Jalali M."/>
            <person name="Kalush F."/>
            <person name="Karpen G.H."/>
            <person name="Ke Z."/>
            <person name="Kennison J.A."/>
            <person name="Ketchum K.A."/>
            <person name="Kimmel B.E."/>
            <person name="Kodira C.D."/>
            <person name="Kraft C.L."/>
            <person name="Kravitz S."/>
            <person name="Kulp D."/>
            <person name="Lai Z."/>
            <person name="Lasko P."/>
            <person name="Lei Y."/>
            <person name="Levitsky A.A."/>
            <person name="Li J.H."/>
            <person name="Li Z."/>
            <person name="Liang Y."/>
            <person name="Lin X."/>
            <person name="Liu X."/>
            <person name="Mattei B."/>
            <person name="McIntosh T.C."/>
            <person name="McLeod M.P."/>
            <person name="McPherson D."/>
            <person name="Merkulov G."/>
            <person name="Milshina N.V."/>
            <person name="Mobarry C."/>
            <person name="Morris J."/>
            <person name="Moshrefi A."/>
            <person name="Mount S.M."/>
            <person name="Moy M."/>
            <person name="Murphy B."/>
            <person name="Murphy L."/>
            <person name="Muzny D.M."/>
            <person name="Nelson D.L."/>
            <person name="Nelson D.R."/>
            <person name="Nelson K.A."/>
            <person name="Nixon K."/>
            <person name="Nusskern D.R."/>
            <person name="Pacleb J.M."/>
            <person name="Palazzolo M."/>
            <person name="Pittman G.S."/>
            <person name="Pan S."/>
            <person name="Pollard J."/>
            <person name="Puri V."/>
            <person name="Reese M.G."/>
            <person name="Reinert K."/>
            <person name="Remington K."/>
            <person name="Saunders R.D.C."/>
            <person name="Scheeler F."/>
            <person name="Shen H."/>
            <person name="Shue B.C."/>
            <person name="Siden-Kiamos I."/>
            <person name="Simpson M."/>
            <person name="Skupski M.P."/>
            <person name="Smith T.J."/>
            <person name="Spier E."/>
            <person name="Spradling A.C."/>
            <person name="Stapleton M."/>
            <person name="Strong R."/>
            <person name="Sun E."/>
            <person name="Svirskas R."/>
            <person name="Tector C."/>
            <person name="Turner R."/>
            <person name="Venter E."/>
            <person name="Wang A.H."/>
            <person name="Wang X."/>
            <person name="Wang Z.-Y."/>
            <person name="Wassarman D.A."/>
            <person name="Weinstock G.M."/>
            <person name="Weissenbach J."/>
            <person name="Williams S.M."/>
            <person name="Woodage T."/>
            <person name="Worley K.C."/>
            <person name="Wu D."/>
            <person name="Yang S."/>
            <person name="Yao Q.A."/>
            <person name="Ye J."/>
            <person name="Yeh R.-F."/>
            <person name="Zaveri J.S."/>
            <person name="Zhan M."/>
            <person name="Zhang G."/>
            <person name="Zhao Q."/>
            <person name="Zheng L."/>
            <person name="Zheng X.H."/>
            <person name="Zhong F.N."/>
            <person name="Zhong W."/>
            <person name="Zhou X."/>
            <person name="Zhu S.C."/>
            <person name="Zhu X."/>
            <person name="Smith H.O."/>
            <person name="Gibbs R.A."/>
            <person name="Myers E.W."/>
            <person name="Rubin G.M."/>
            <person name="Venter J.C."/>
        </authorList>
    </citation>
    <scope>NUCLEOTIDE SEQUENCE [LARGE SCALE GENOMIC DNA]</scope>
    <source>
        <strain evidence="9">Berkeley</strain>
    </source>
</reference>
<reference evidence="9" key="2">
    <citation type="journal article" date="2002" name="Genome Biol.">
        <title>Annotation of the Drosophila melanogaster euchromatic genome: a systematic review.</title>
        <authorList>
            <person name="Misra S."/>
            <person name="Crosby M.A."/>
            <person name="Mungall C.J."/>
            <person name="Matthews B.B."/>
            <person name="Campbell K.S."/>
            <person name="Hradecky P."/>
            <person name="Huang Y."/>
            <person name="Kaminker J.S."/>
            <person name="Millburn G.H."/>
            <person name="Prochnik S.E."/>
            <person name="Smith C.D."/>
            <person name="Tupy J.L."/>
            <person name="Whitfield E.J."/>
            <person name="Bayraktaroglu L."/>
            <person name="Berman B.P."/>
            <person name="Bettencourt B.R."/>
            <person name="Celniker S.E."/>
            <person name="de Grey A.D.N.J."/>
            <person name="Drysdale R.A."/>
            <person name="Harris N.L."/>
            <person name="Richter J."/>
            <person name="Russo S."/>
            <person name="Schroeder A.J."/>
            <person name="Shu S.Q."/>
            <person name="Stapleton M."/>
            <person name="Yamada C."/>
            <person name="Ashburner M."/>
            <person name="Gelbart W.M."/>
            <person name="Rubin G.M."/>
            <person name="Lewis S.E."/>
        </authorList>
    </citation>
    <scope>GENOME REANNOTATION</scope>
    <source>
        <strain evidence="9">Berkeley</strain>
    </source>
</reference>
<reference evidence="7" key="3">
    <citation type="submission" date="2003-02" db="EMBL/GenBank/DDBJ databases">
        <authorList>
            <person name="Stapleton M."/>
            <person name="Brokstein P."/>
            <person name="Hong L."/>
            <person name="Agbayani A."/>
            <person name="Carlson J."/>
            <person name="Champe M."/>
            <person name="Chavez C."/>
            <person name="Dorsett V."/>
            <person name="Dresnek D."/>
            <person name="Farfan D."/>
            <person name="Frise E."/>
            <person name="George R."/>
            <person name="Gonzalez M."/>
            <person name="Guarin H."/>
            <person name="Kronmiller B."/>
            <person name="Li P."/>
            <person name="Liao G."/>
            <person name="Miranda A."/>
            <person name="Mungall C.J."/>
            <person name="Nunoo J."/>
            <person name="Pacleb J."/>
            <person name="Paragas V."/>
            <person name="Park S."/>
            <person name="Patel S."/>
            <person name="Phouanenavong S."/>
            <person name="Wan K."/>
            <person name="Yu C."/>
            <person name="Lewis S.E."/>
            <person name="Rubin G.M."/>
            <person name="Celniker S."/>
        </authorList>
    </citation>
    <scope>NUCLEOTIDE SEQUENCE [LARGE SCALE MRNA]</scope>
    <source>
        <strain evidence="7">Berkeley</strain>
        <tissue evidence="7">Testis</tissue>
    </source>
</reference>
<reference evidence="6" key="4">
    <citation type="journal article" date="2016" name="J. Biol. Chem.">
        <title>Squamous Cell Carcinoma-related Oncogene (SCCRO) Family Members Regulate Cell Growth and Proliferation through Their Cooperative and Antagonistic Effects on Cullin Neddylation.</title>
        <authorList>
            <person name="Fu W."/>
            <person name="Sun J."/>
            <person name="Huang G."/>
            <person name="Liu J.C."/>
            <person name="Kaufman A."/>
            <person name="Ryan R.J."/>
            <person name="Ramanathan S.Y."/>
            <person name="Venkatesh T."/>
            <person name="Singh B."/>
        </authorList>
    </citation>
    <scope>FUNCTION</scope>
    <scope>SUBCELLULAR LOCATION</scope>
    <scope>DISRUPTION PHENOTYPE</scope>
</reference>
<sequence>MGNCLKCFQSAAEQSMPTNASSPNSHNSNSNACQTATSLANCYESVGINPNANERCALETDELLSSRTPLKPAKANNCDTKRNSFKSLGLLNGSAPTMSDIITTAVQESMEVSHQTLSKLFDVYKDPDDEEMILTDGIERLCNDLNYQPDEFAILVLAWCLDASQMCRFTKVEFIEGLHKMRADTIDSIRVRLEQTIEMLKADAEMFKQLYRFTFRFGLEPDQRVLSLEMAIDLWKLVFTVQTPDLFSNWIHFLEKHPNIRRIPKDTWNMYLNFTEQCDIQNYDDTEAWPSLFDDFVDYEKSRALVSSGIHDDDNNNDDPLQSHVKAEDPGLVS</sequence>
<accession>Q8T8S1</accession>
<accession>Q9V6I4</accession>
<protein>
    <recommendedName>
        <fullName evidence="6">DCN1-like protein 3</fullName>
        <shortName evidence="1">DCNL3</shortName>
    </recommendedName>
    <alternativeName>
        <fullName evidence="5">DCUN1 domain-containing protein 3</fullName>
    </alternativeName>
    <alternativeName>
        <fullName evidence="5">Defective in cullin neddylation protein 1-like protein 3</fullName>
    </alternativeName>
    <alternativeName>
        <fullName evidence="5">Squamous cell carcinoma-related oncogene 3</fullName>
    </alternativeName>
</protein>
<comment type="function">
    <text evidence="4">Promotes neddylation of cullin components of SCF-type E3 ubiquitin ligase complexes and thus regulates SCF-type complex activity (PubMed:26792857). Function promotes cell proliferation (PubMed:26792857).</text>
</comment>
<comment type="subcellular location">
    <subcellularLocation>
        <location evidence="4">Cell membrane</location>
    </subcellularLocation>
    <text evidence="4">Predominantly localizes to the cell membrane in eye imaginal disk cells.</text>
</comment>
<comment type="disruption phenotype">
    <text evidence="4">Viable but with decreased survival (PubMed:26792857). Mutant females produce less offspring with wild-type males (PubMed:26792857). No gross morphological defects and no effect on locomotor behavior (PubMed:26792857). Ubiquitous RNAi-mediated knockdown is not lethal (PubMed:26792857).</text>
</comment>
<dbReference type="EMBL" id="AE013599">
    <property type="protein sequence ID" value="AAF58439.2"/>
    <property type="molecule type" value="Genomic_DNA"/>
</dbReference>
<dbReference type="EMBL" id="AE013599">
    <property type="protein sequence ID" value="AAM68618.1"/>
    <property type="molecule type" value="Genomic_DNA"/>
</dbReference>
<dbReference type="EMBL" id="AE013599">
    <property type="protein sequence ID" value="AAM68619.1"/>
    <property type="molecule type" value="Genomic_DNA"/>
</dbReference>
<dbReference type="EMBL" id="AY075303">
    <property type="protein sequence ID" value="AAL68170.1"/>
    <property type="molecule type" value="mRNA"/>
</dbReference>
<dbReference type="RefSeq" id="NP_610828.2">
    <property type="nucleotide sequence ID" value="NM_136984.4"/>
</dbReference>
<dbReference type="RefSeq" id="NP_725243.1">
    <property type="nucleotide sequence ID" value="NM_165962.4"/>
</dbReference>
<dbReference type="RefSeq" id="NP_725244.1">
    <property type="nucleotide sequence ID" value="NM_165963.3"/>
</dbReference>
<dbReference type="SMR" id="Q8T8S1"/>
<dbReference type="FunCoup" id="Q8T8S1">
    <property type="interactions" value="559"/>
</dbReference>
<dbReference type="IntAct" id="Q8T8S1">
    <property type="interactions" value="4"/>
</dbReference>
<dbReference type="STRING" id="7227.FBpp0086916"/>
<dbReference type="PaxDb" id="7227-FBpp0086916"/>
<dbReference type="DNASU" id="36426"/>
<dbReference type="EnsemblMetazoa" id="FBtr0087803">
    <property type="protein sequence ID" value="FBpp0086916"/>
    <property type="gene ID" value="FBgn0033784"/>
</dbReference>
<dbReference type="EnsemblMetazoa" id="FBtr0087804">
    <property type="protein sequence ID" value="FBpp0086917"/>
    <property type="gene ID" value="FBgn0033784"/>
</dbReference>
<dbReference type="EnsemblMetazoa" id="FBtr0087805">
    <property type="protein sequence ID" value="FBpp0086918"/>
    <property type="gene ID" value="FBgn0033784"/>
</dbReference>
<dbReference type="GeneID" id="36426"/>
<dbReference type="KEGG" id="dme:Dmel_CG13322"/>
<dbReference type="UCSC" id="CG13322-RA">
    <property type="organism name" value="d. melanogaster"/>
</dbReference>
<dbReference type="AGR" id="FB:FBgn0033784"/>
<dbReference type="CTD" id="36426"/>
<dbReference type="FlyBase" id="FBgn0033784">
    <property type="gene designation" value="SCCRO3"/>
</dbReference>
<dbReference type="VEuPathDB" id="VectorBase:FBgn0033784"/>
<dbReference type="eggNOG" id="KOG3077">
    <property type="taxonomic scope" value="Eukaryota"/>
</dbReference>
<dbReference type="GeneTree" id="ENSGT00940000154944"/>
<dbReference type="HOGENOM" id="CLU_047042_2_1_1"/>
<dbReference type="InParanoid" id="Q8T8S1"/>
<dbReference type="OMA" id="MCRFTKA"/>
<dbReference type="OrthoDB" id="27198at2759"/>
<dbReference type="Reactome" id="R-DME-8951664">
    <property type="pathway name" value="Neddylation"/>
</dbReference>
<dbReference type="BioGRID-ORCS" id="36426">
    <property type="hits" value="0 hits in 1 CRISPR screen"/>
</dbReference>
<dbReference type="GenomeRNAi" id="36426"/>
<dbReference type="PRO" id="PR:Q8T8S1"/>
<dbReference type="Proteomes" id="UP000000803">
    <property type="component" value="Chromosome 2R"/>
</dbReference>
<dbReference type="Bgee" id="FBgn0033784">
    <property type="expression patterns" value="Expressed in early-mid elongation-stage spermatid (Drosophila) in testis and 97 other cell types or tissues"/>
</dbReference>
<dbReference type="GO" id="GO:0048471">
    <property type="term" value="C:perinuclear region of cytoplasm"/>
    <property type="evidence" value="ECO:0000250"/>
    <property type="project" value="FlyBase"/>
</dbReference>
<dbReference type="GO" id="GO:0005886">
    <property type="term" value="C:plasma membrane"/>
    <property type="evidence" value="ECO:0000314"/>
    <property type="project" value="FlyBase"/>
</dbReference>
<dbReference type="GO" id="GO:0000151">
    <property type="term" value="C:ubiquitin ligase complex"/>
    <property type="evidence" value="ECO:0000318"/>
    <property type="project" value="GO_Central"/>
</dbReference>
<dbReference type="GO" id="GO:0097602">
    <property type="term" value="F:cullin family protein binding"/>
    <property type="evidence" value="ECO:0000318"/>
    <property type="project" value="GO_Central"/>
</dbReference>
<dbReference type="GO" id="GO:0031624">
    <property type="term" value="F:ubiquitin conjugating enzyme binding"/>
    <property type="evidence" value="ECO:0000318"/>
    <property type="project" value="GO_Central"/>
</dbReference>
<dbReference type="GO" id="GO:0032182">
    <property type="term" value="F:ubiquitin-like protein binding"/>
    <property type="evidence" value="ECO:0000318"/>
    <property type="project" value="GO_Central"/>
</dbReference>
<dbReference type="GO" id="GO:0030308">
    <property type="term" value="P:negative regulation of cell growth"/>
    <property type="evidence" value="ECO:0000250"/>
    <property type="project" value="FlyBase"/>
</dbReference>
<dbReference type="GO" id="GO:0043065">
    <property type="term" value="P:positive regulation of apoptotic process"/>
    <property type="evidence" value="ECO:0000250"/>
    <property type="project" value="FlyBase"/>
</dbReference>
<dbReference type="GO" id="GO:2000436">
    <property type="term" value="P:positive regulation of protein neddylation"/>
    <property type="evidence" value="ECO:0000316"/>
    <property type="project" value="FlyBase"/>
</dbReference>
<dbReference type="GO" id="GO:0045116">
    <property type="term" value="P:protein neddylation"/>
    <property type="evidence" value="ECO:0000318"/>
    <property type="project" value="GO_Central"/>
</dbReference>
<dbReference type="FunFam" id="1.10.238.10:FF:000030">
    <property type="entry name" value="DCN1-like protein"/>
    <property type="match status" value="1"/>
</dbReference>
<dbReference type="FunFam" id="1.10.238.200:FF:000003">
    <property type="entry name" value="DCN1-like protein 3"/>
    <property type="match status" value="1"/>
</dbReference>
<dbReference type="Gene3D" id="1.10.238.200">
    <property type="entry name" value="Cullin, PONY binding domain"/>
    <property type="match status" value="1"/>
</dbReference>
<dbReference type="Gene3D" id="1.10.238.10">
    <property type="entry name" value="EF-hand"/>
    <property type="match status" value="1"/>
</dbReference>
<dbReference type="InterPro" id="IPR014764">
    <property type="entry name" value="DCN-prot"/>
</dbReference>
<dbReference type="InterPro" id="IPR042460">
    <property type="entry name" value="DCN1-like_PONY"/>
</dbReference>
<dbReference type="InterPro" id="IPR005176">
    <property type="entry name" value="PONY_dom"/>
</dbReference>
<dbReference type="PANTHER" id="PTHR12281:SF31">
    <property type="entry name" value="DCN1-LIKE PROTEIN 3"/>
    <property type="match status" value="1"/>
</dbReference>
<dbReference type="PANTHER" id="PTHR12281">
    <property type="entry name" value="RP42 RELATED"/>
    <property type="match status" value="1"/>
</dbReference>
<dbReference type="Pfam" id="PF03556">
    <property type="entry name" value="Cullin_binding"/>
    <property type="match status" value="1"/>
</dbReference>
<dbReference type="PROSITE" id="PS51229">
    <property type="entry name" value="DCUN1"/>
    <property type="match status" value="1"/>
</dbReference>
<gene>
    <name evidence="5 8" type="primary">SCCRO3</name>
    <name evidence="6" type="synonym">Dcun1d3</name>
    <name evidence="8" type="ORF">CG13322</name>
</gene>
<evidence type="ECO:0000250" key="1">
    <source>
        <dbReference type="UniProtKB" id="Q8IWE4"/>
    </source>
</evidence>
<evidence type="ECO:0000255" key="2">
    <source>
        <dbReference type="PROSITE-ProRule" id="PRU00574"/>
    </source>
</evidence>
<evidence type="ECO:0000256" key="3">
    <source>
        <dbReference type="SAM" id="MobiDB-lite"/>
    </source>
</evidence>
<evidence type="ECO:0000269" key="4">
    <source>
    </source>
</evidence>
<evidence type="ECO:0000303" key="5">
    <source>
    </source>
</evidence>
<evidence type="ECO:0000305" key="6"/>
<evidence type="ECO:0000312" key="7">
    <source>
        <dbReference type="EMBL" id="AAL68170.1"/>
    </source>
</evidence>
<evidence type="ECO:0000312" key="8">
    <source>
        <dbReference type="FlyBase" id="FBgn0033784"/>
    </source>
</evidence>
<evidence type="ECO:0000312" key="9">
    <source>
        <dbReference type="Proteomes" id="UP000000803"/>
    </source>
</evidence>
<name>DCNL3_DROME</name>